<evidence type="ECO:0000250" key="1">
    <source>
        <dbReference type="UniProtKB" id="O85465"/>
    </source>
</evidence>
<evidence type="ECO:0000256" key="2">
    <source>
        <dbReference type="SAM" id="MobiDB-lite"/>
    </source>
</evidence>
<evidence type="ECO:0000269" key="3">
    <source>
    </source>
</evidence>
<evidence type="ECO:0000269" key="4">
    <source>
    </source>
</evidence>
<evidence type="ECO:0000305" key="5"/>
<evidence type="ECO:0007829" key="6">
    <source>
        <dbReference type="PDB" id="1AIW"/>
    </source>
</evidence>
<evidence type="ECO:0007829" key="7">
    <source>
        <dbReference type="PDB" id="1EGZ"/>
    </source>
</evidence>
<sequence>MPLSYLDKNPVIDSKKHALRKKLFLSCAYFGLSLACLSSNAWASVEPLSVNGNKIYAGEKAKSFAGNSLFWSNNGWGGEKFYTADTVASLKKDWKSSIVRAAMGVQESGGYLQDPAGNKAKVERVVDAAIANDMYAIIGWHSHSAENNRSEAIRFFQEMARKYGNKPNVIYEIYNEPLQVSWSNTIKPYAEAVISAIRAIDPDNLIIVGTPSWSQNVDEASRDPINAKNIAYTLHFYAGTHGESLRNKARQALNNGIALFVTEWGTVNADGNGGVNQTETDAWVTFMRDNNISNANWALNDKNEGASTYYPDSKNLTESGKKVKSIIQSWPYKAGSAASATTDPSTDTTTDTTVDEPTTTDTPATADCANANVYPNWVSKDWAGGQPTHNEAGQSIVYKGNLYTANWYTASVPGSDSSWTQVGSCN</sequence>
<organism>
    <name type="scientific">Dickeya dadantii (strain 3937)</name>
    <name type="common">Erwinia chrysanthemi (strain 3937)</name>
    <dbReference type="NCBI Taxonomy" id="198628"/>
    <lineage>
        <taxon>Bacteria</taxon>
        <taxon>Pseudomonadati</taxon>
        <taxon>Pseudomonadota</taxon>
        <taxon>Gammaproteobacteria</taxon>
        <taxon>Enterobacterales</taxon>
        <taxon>Pectobacteriaceae</taxon>
        <taxon>Dickeya</taxon>
    </lineage>
</organism>
<proteinExistence type="evidence at protein level"/>
<dbReference type="EC" id="3.2.1.4"/>
<dbReference type="EMBL" id="Y00540">
    <property type="protein sequence ID" value="CAA68604.1"/>
    <property type="molecule type" value="Genomic_DNA"/>
</dbReference>
<dbReference type="EMBL" id="CP002038">
    <property type="protein sequence ID" value="ADM99099.1"/>
    <property type="molecule type" value="Genomic_DNA"/>
</dbReference>
<dbReference type="PIR" id="S03767">
    <property type="entry name" value="S03767"/>
</dbReference>
<dbReference type="RefSeq" id="WP_013318538.1">
    <property type="nucleotide sequence ID" value="NC_014500.1"/>
</dbReference>
<dbReference type="PDB" id="1AIW">
    <property type="method" value="NMR"/>
    <property type="chains" value="A=367-426"/>
</dbReference>
<dbReference type="PDB" id="1EGZ">
    <property type="method" value="X-ray"/>
    <property type="resolution" value="2.30 A"/>
    <property type="chains" value="A/B/C=44-334"/>
</dbReference>
<dbReference type="PDBsum" id="1AIW"/>
<dbReference type="PDBsum" id="1EGZ"/>
<dbReference type="SMR" id="P07103"/>
<dbReference type="STRING" id="198628.Dda3937_02793"/>
<dbReference type="CAZy" id="CBM5">
    <property type="family name" value="Carbohydrate-Binding Module Family 5"/>
</dbReference>
<dbReference type="CAZy" id="GH5">
    <property type="family name" value="Glycoside Hydrolase Family 5"/>
</dbReference>
<dbReference type="KEGG" id="ddd:Dda3937_02793"/>
<dbReference type="PATRIC" id="fig|198628.6.peg.2889"/>
<dbReference type="eggNOG" id="COG2730">
    <property type="taxonomic scope" value="Bacteria"/>
</dbReference>
<dbReference type="HOGENOM" id="CLU_012932_1_2_6"/>
<dbReference type="OrthoDB" id="9775889at2"/>
<dbReference type="EvolutionaryTrace" id="P07103"/>
<dbReference type="Proteomes" id="UP000006859">
    <property type="component" value="Chromosome"/>
</dbReference>
<dbReference type="GO" id="GO:0005576">
    <property type="term" value="C:extracellular region"/>
    <property type="evidence" value="ECO:0007669"/>
    <property type="project" value="UniProtKB-SubCell"/>
</dbReference>
<dbReference type="GO" id="GO:0030246">
    <property type="term" value="F:carbohydrate binding"/>
    <property type="evidence" value="ECO:0007669"/>
    <property type="project" value="InterPro"/>
</dbReference>
<dbReference type="GO" id="GO:0008810">
    <property type="term" value="F:cellulase activity"/>
    <property type="evidence" value="ECO:0007669"/>
    <property type="project" value="UniProtKB-EC"/>
</dbReference>
<dbReference type="GO" id="GO:0030245">
    <property type="term" value="P:cellulose catabolic process"/>
    <property type="evidence" value="ECO:0007669"/>
    <property type="project" value="UniProtKB-KW"/>
</dbReference>
<dbReference type="CDD" id="cd12204">
    <property type="entry name" value="CBD_like"/>
    <property type="match status" value="1"/>
</dbReference>
<dbReference type="Gene3D" id="2.10.10.20">
    <property type="entry name" value="Carbohydrate-binding module superfamily 5/12"/>
    <property type="match status" value="1"/>
</dbReference>
<dbReference type="Gene3D" id="3.20.20.80">
    <property type="entry name" value="Glycosidases"/>
    <property type="match status" value="1"/>
</dbReference>
<dbReference type="InterPro" id="IPR003610">
    <property type="entry name" value="CBM5/12"/>
</dbReference>
<dbReference type="InterPro" id="IPR032798">
    <property type="entry name" value="CBM_5_12_2"/>
</dbReference>
<dbReference type="InterPro" id="IPR036573">
    <property type="entry name" value="CBM_sf_5/12"/>
</dbReference>
<dbReference type="InterPro" id="IPR001547">
    <property type="entry name" value="Glyco_hydro_5"/>
</dbReference>
<dbReference type="InterPro" id="IPR018087">
    <property type="entry name" value="Glyco_hydro_5_CS"/>
</dbReference>
<dbReference type="InterPro" id="IPR017853">
    <property type="entry name" value="Glycoside_hydrolase_SF"/>
</dbReference>
<dbReference type="PANTHER" id="PTHR34142">
    <property type="entry name" value="ENDO-BETA-1,4-GLUCANASE A"/>
    <property type="match status" value="1"/>
</dbReference>
<dbReference type="PANTHER" id="PTHR34142:SF1">
    <property type="entry name" value="GLYCOSIDE HYDROLASE FAMILY 5 DOMAIN-CONTAINING PROTEIN"/>
    <property type="match status" value="1"/>
</dbReference>
<dbReference type="Pfam" id="PF14600">
    <property type="entry name" value="CBM_5_12_2"/>
    <property type="match status" value="1"/>
</dbReference>
<dbReference type="Pfam" id="PF00150">
    <property type="entry name" value="Cellulase"/>
    <property type="match status" value="1"/>
</dbReference>
<dbReference type="SMART" id="SM00495">
    <property type="entry name" value="ChtBD3"/>
    <property type="match status" value="1"/>
</dbReference>
<dbReference type="SUPFAM" id="SSF51445">
    <property type="entry name" value="(Trans)glycosidases"/>
    <property type="match status" value="1"/>
</dbReference>
<dbReference type="SUPFAM" id="SSF51055">
    <property type="entry name" value="Carbohydrate binding domain"/>
    <property type="match status" value="1"/>
</dbReference>
<dbReference type="PROSITE" id="PS00659">
    <property type="entry name" value="GLYCOSYL_HYDROL_F5"/>
    <property type="match status" value="1"/>
</dbReference>
<protein>
    <recommendedName>
        <fullName>Endoglucanase Z</fullName>
        <ecNumber>3.2.1.4</ecNumber>
    </recommendedName>
    <alternativeName>
        <fullName>Cellulase Z</fullName>
    </alternativeName>
    <alternativeName>
        <fullName>Endo-1,4-beta-glucanase Z</fullName>
        <shortName>EGZ</shortName>
    </alternativeName>
</protein>
<feature type="signal peptide">
    <location>
        <begin position="1"/>
        <end position="43"/>
    </location>
</feature>
<feature type="chain" id="PRO_0000007860" description="Endoglucanase Z">
    <location>
        <begin position="44"/>
        <end position="426"/>
    </location>
</feature>
<feature type="region of interest" description="Catalytic">
    <location>
        <begin position="44"/>
        <end position="332"/>
    </location>
</feature>
<feature type="region of interest" description="Linker">
    <location>
        <begin position="333"/>
        <end position="366"/>
    </location>
</feature>
<feature type="region of interest" description="Disordered" evidence="2">
    <location>
        <begin position="336"/>
        <end position="367"/>
    </location>
</feature>
<feature type="region of interest" description="Cellulose-binding">
    <location>
        <begin position="367"/>
        <end position="426"/>
    </location>
</feature>
<feature type="active site" description="Proton donor">
    <location>
        <position position="176"/>
    </location>
</feature>
<feature type="active site" description="Nucleophile" evidence="1">
    <location>
        <position position="263"/>
    </location>
</feature>
<feature type="disulfide bond" evidence="4">
    <location>
        <begin position="368"/>
        <end position="425"/>
    </location>
</feature>
<feature type="mutagenesis site" description="Loss of activity." evidence="3">
    <original>H</original>
    <variation>A</variation>
    <location>
        <position position="141"/>
    </location>
</feature>
<feature type="mutagenesis site" description="Loss of activity." evidence="3">
    <original>E</original>
    <variation>A</variation>
    <location>
        <position position="176"/>
    </location>
</feature>
<feature type="sequence conflict" description="In Ref. 1; CAA68604." evidence="5" ref="1">
    <original>SNA</original>
    <variation>QLTQ</variation>
    <location>
        <begin position="293"/>
        <end position="295"/>
    </location>
</feature>
<feature type="sequence conflict" description="In Ref. 1; CAA68604." evidence="5" ref="1">
    <original>TDTTVDEPTTTDTPA</original>
    <variation>MTPPLTNRPQPTHRQ</variation>
    <location>
        <begin position="350"/>
        <end position="364"/>
    </location>
</feature>
<feature type="sequence conflict" description="In Ref. 1." evidence="5" ref="1">
    <original>THNEAGQSIVYKGNLYTANWYTASVPGSDSSWTQVGSCN</original>
    <variation>LITKQANRSSTKATCIPQTGTPHPFRAAIPPGRRLVAVTN</variation>
    <location>
        <begin position="388"/>
        <end position="426"/>
    </location>
</feature>
<feature type="strand" evidence="7">
    <location>
        <begin position="48"/>
        <end position="51"/>
    </location>
</feature>
<feature type="strand" evidence="7">
    <location>
        <begin position="54"/>
        <end position="57"/>
    </location>
</feature>
<feature type="strand" evidence="7">
    <location>
        <begin position="65"/>
        <end position="71"/>
    </location>
</feature>
<feature type="helix" evidence="7">
    <location>
        <begin position="78"/>
        <end position="81"/>
    </location>
</feature>
<feature type="helix" evidence="7">
    <location>
        <begin position="84"/>
        <end position="92"/>
    </location>
</feature>
<feature type="strand" evidence="7">
    <location>
        <begin position="98"/>
        <end position="104"/>
    </location>
</feature>
<feature type="turn" evidence="7">
    <location>
        <begin position="111"/>
        <end position="113"/>
    </location>
</feature>
<feature type="helix" evidence="7">
    <location>
        <begin position="115"/>
        <end position="131"/>
    </location>
</feature>
<feature type="strand" evidence="7">
    <location>
        <begin position="135"/>
        <end position="141"/>
    </location>
</feature>
<feature type="helix" evidence="7">
    <location>
        <begin position="145"/>
        <end position="148"/>
    </location>
</feature>
<feature type="helix" evidence="7">
    <location>
        <begin position="149"/>
        <end position="163"/>
    </location>
</feature>
<feature type="strand" evidence="7">
    <location>
        <begin position="169"/>
        <end position="172"/>
    </location>
</feature>
<feature type="turn" evidence="7">
    <location>
        <begin position="182"/>
        <end position="185"/>
    </location>
</feature>
<feature type="helix" evidence="7">
    <location>
        <begin position="186"/>
        <end position="200"/>
    </location>
</feature>
<feature type="strand" evidence="7">
    <location>
        <begin position="202"/>
        <end position="204"/>
    </location>
</feature>
<feature type="strand" evidence="7">
    <location>
        <begin position="206"/>
        <end position="208"/>
    </location>
</feature>
<feature type="helix" evidence="7">
    <location>
        <begin position="211"/>
        <end position="214"/>
    </location>
</feature>
<feature type="helix" evidence="7">
    <location>
        <begin position="217"/>
        <end position="221"/>
    </location>
</feature>
<feature type="strand" evidence="7">
    <location>
        <begin position="227"/>
        <end position="237"/>
    </location>
</feature>
<feature type="turn" evidence="7">
    <location>
        <begin position="238"/>
        <end position="240"/>
    </location>
</feature>
<feature type="helix" evidence="7">
    <location>
        <begin position="243"/>
        <end position="254"/>
    </location>
</feature>
<feature type="strand" evidence="7">
    <location>
        <begin position="259"/>
        <end position="267"/>
    </location>
</feature>
<feature type="helix" evidence="7">
    <location>
        <begin position="277"/>
        <end position="289"/>
    </location>
</feature>
<feature type="strand" evidence="7">
    <location>
        <begin position="294"/>
        <end position="299"/>
    </location>
</feature>
<feature type="strand" evidence="7">
    <location>
        <begin position="302"/>
        <end position="304"/>
    </location>
</feature>
<feature type="helix" evidence="7">
    <location>
        <begin position="318"/>
        <end position="328"/>
    </location>
</feature>
<feature type="strand" evidence="6">
    <location>
        <begin position="367"/>
        <end position="371"/>
    </location>
</feature>
<feature type="strand" evidence="6">
    <location>
        <begin position="378"/>
        <end position="385"/>
    </location>
</feature>
<feature type="strand" evidence="6">
    <location>
        <begin position="389"/>
        <end position="392"/>
    </location>
</feature>
<feature type="strand" evidence="6">
    <location>
        <begin position="395"/>
        <end position="398"/>
    </location>
</feature>
<feature type="strand" evidence="6">
    <location>
        <begin position="401"/>
        <end position="409"/>
    </location>
</feature>
<feature type="strand" evidence="6">
    <location>
        <begin position="419"/>
        <end position="424"/>
    </location>
</feature>
<accession>P07103</accession>
<accession>E0SIP0</accession>
<keyword id="KW-0002">3D-structure</keyword>
<keyword id="KW-0119">Carbohydrate metabolism</keyword>
<keyword id="KW-0136">Cellulose degradation</keyword>
<keyword id="KW-1015">Disulfide bond</keyword>
<keyword id="KW-0326">Glycosidase</keyword>
<keyword id="KW-0378">Hydrolase</keyword>
<keyword id="KW-0624">Polysaccharide degradation</keyword>
<keyword id="KW-1185">Reference proteome</keyword>
<keyword id="KW-0964">Secreted</keyword>
<keyword id="KW-0732">Signal</keyword>
<comment type="function">
    <text>Represents 97% of the global cellulase activity.</text>
</comment>
<comment type="catalytic activity">
    <reaction>
        <text>Endohydrolysis of (1-&gt;4)-beta-D-glucosidic linkages in cellulose, lichenin and cereal beta-D-glucans.</text>
        <dbReference type="EC" id="3.2.1.4"/>
    </reaction>
</comment>
<comment type="subcellular location">
    <subcellularLocation>
        <location>Secreted</location>
    </subcellularLocation>
</comment>
<comment type="similarity">
    <text evidence="5">Belongs to the glycosyl hydrolase 5 (cellulase A) family.</text>
</comment>
<gene>
    <name type="primary">celZ</name>
    <name type="synonym">cel5</name>
    <name type="synonym">cel5Z</name>
    <name type="ordered locus">Dda3937_02793</name>
</gene>
<name>GUNZ_DICD3</name>
<reference key="1">
    <citation type="journal article" date="1988" name="Mol. Microbiol.">
        <title>Homology between endoglucanase Z of Erwinia chrysanthemi and endoglucanases of Bacillus subtilis and alkalophilic Bacillus.</title>
        <authorList>
            <person name="Guiseppi A."/>
            <person name="Cami B."/>
            <person name="Aymeric J.-L."/>
            <person name="Ball G."/>
            <person name="Creuzet N."/>
        </authorList>
    </citation>
    <scope>NUCLEOTIDE SEQUENCE [GENOMIC DNA]</scope>
    <source>
        <strain>3937</strain>
    </source>
</reference>
<reference key="2">
    <citation type="journal article" date="1994" name="Mol. Microbiol.">
        <title>Periplasmic disulphide bond formation is essential for cellulase secretion by the plant pathogen Erwinia chrysanthemi.</title>
        <authorList>
            <person name="Bortoli-German I."/>
            <person name="Brun E."/>
            <person name="Py B."/>
            <person name="Chippaux M."/>
            <person name="Barras F."/>
        </authorList>
    </citation>
    <scope>SEQUENCE REVISION</scope>
    <scope>DISULFIDE BOND</scope>
</reference>
<reference key="3">
    <citation type="journal article" date="2011" name="J. Bacteriol.">
        <title>Genome sequence of the plant-pathogenic bacterium Dickeya dadantii 3937.</title>
        <authorList>
            <person name="Glasner J.D."/>
            <person name="Yang C.H."/>
            <person name="Reverchon S."/>
            <person name="Hugouvieux-Cotte-Pattat N."/>
            <person name="Condemine G."/>
            <person name="Bohin J.P."/>
            <person name="Van Gijsegem F."/>
            <person name="Yang S."/>
            <person name="Franza T."/>
            <person name="Expert D."/>
            <person name="Plunkett G. III"/>
            <person name="San Francisco M.J."/>
            <person name="Charkowski A.O."/>
            <person name="Py B."/>
            <person name="Bell K."/>
            <person name="Rauscher L."/>
            <person name="Rodriguez-Palenzuela P."/>
            <person name="Toussaint A."/>
            <person name="Holeva M.C."/>
            <person name="He S.Y."/>
            <person name="Douet V."/>
            <person name="Boccara M."/>
            <person name="Blanco C."/>
            <person name="Toth I."/>
            <person name="Anderson B.D."/>
            <person name="Biehl B.S."/>
            <person name="Mau B."/>
            <person name="Flynn S.M."/>
            <person name="Barras F."/>
            <person name="Lindeberg M."/>
            <person name="Birch P.R."/>
            <person name="Tsuyumu S."/>
            <person name="Shi X."/>
            <person name="Hibbing M."/>
            <person name="Yap M.N."/>
            <person name="Carpentier M."/>
            <person name="Dassa E."/>
            <person name="Umehara M."/>
            <person name="Kim J.F."/>
            <person name="Rusch M."/>
            <person name="Soni P."/>
            <person name="Mayhew G.F."/>
            <person name="Fouts D.E."/>
            <person name="Gill S.R."/>
            <person name="Blattner F.R."/>
            <person name="Keen N.T."/>
            <person name="Perna N.T."/>
        </authorList>
    </citation>
    <scope>NUCLEOTIDE SEQUENCE [LARGE SCALE GENOMIC DNA]</scope>
    <source>
        <strain>3937</strain>
    </source>
</reference>
<reference key="4">
    <citation type="journal article" date="1991" name="Protein Eng.">
        <title>Cellulase EGZ of Erwinia chrysanthemi: structural organization and importance of His98 and Glu133 residues for catalysis.</title>
        <authorList>
            <person name="Py B."/>
            <person name="Bortoli-German I."/>
            <person name="Haiech J."/>
            <person name="Chippaux M."/>
            <person name="Barras F."/>
        </authorList>
    </citation>
    <scope>MUTAGENESIS</scope>
    <scope>DOMAINS</scope>
</reference>
<reference key="5">
    <citation type="journal article" date="1992" name="FEBS Lett.">
        <title>Stereochemistry of the hydrolysis reaction catalyzed by endoglucanase Z from Erwinia chrysanthemi.</title>
        <authorList>
            <person name="Barras F."/>
            <person name="Bortoli-German I."/>
            <person name="Bauzan M."/>
            <person name="Rouvier J."/>
            <person name="Gey C."/>
            <person name="Heyraud A."/>
            <person name="Henrissat B."/>
        </authorList>
    </citation>
    <scope>STEREOCHEMISTRY OF THE REACTION</scope>
    <source>
        <strain>3937</strain>
    </source>
</reference>
<reference key="6">
    <citation type="journal article" date="1997" name="Biochemistry">
        <title>Solution structure of the cellulose-binding domain of the endoglucanase Z secreted by Erwinia chrysanthemi.</title>
        <authorList>
            <person name="Brun E."/>
            <person name="Moriaud F."/>
            <person name="Gans P."/>
            <person name="Blackledge M.J."/>
            <person name="Barras F."/>
            <person name="Marion D."/>
        </authorList>
    </citation>
    <scope>STRUCTURE BY NMR OF 365-426</scope>
</reference>
<reference key="7">
    <citation type="journal article" date="2001" name="J. Mol. Biol.">
        <title>Type II protein secretion in Gram-negative pathogenic bacteria: the study of the structure/secretion relationships of the cellulase Cel5 (formerly EGZ) from Erwinia chrysanthemi.</title>
        <authorList>
            <person name="Chapon V."/>
            <person name="Czjzek M."/>
            <person name="El Hassouni M."/>
            <person name="Py B."/>
            <person name="Juy M."/>
            <person name="Barras F."/>
        </authorList>
    </citation>
    <scope>X-RAY CRYSTALLOGRAPHY (2.3 ANGSTROMS) OF 44-335</scope>
</reference>